<name>URED2_BRUA2</name>
<feature type="chain" id="PRO_0000340420" description="Urease accessory protein UreD 2">
    <location>
        <begin position="1"/>
        <end position="304"/>
    </location>
</feature>
<accession>Q2YQD5</accession>
<organism>
    <name type="scientific">Brucella abortus (strain 2308)</name>
    <dbReference type="NCBI Taxonomy" id="359391"/>
    <lineage>
        <taxon>Bacteria</taxon>
        <taxon>Pseudomonadati</taxon>
        <taxon>Pseudomonadota</taxon>
        <taxon>Alphaproteobacteria</taxon>
        <taxon>Hyphomicrobiales</taxon>
        <taxon>Brucellaceae</taxon>
        <taxon>Brucella/Ochrobactrum group</taxon>
        <taxon>Brucella</taxon>
    </lineage>
</organism>
<protein>
    <recommendedName>
        <fullName evidence="1">Urease accessory protein UreD 2</fullName>
    </recommendedName>
</protein>
<sequence>MLGKARELANYQDEPEQLPTGSFGKNAFLRLGFERRPERTVLATLHRRAPLIVQQALYWDEGMPTLPCVSIISNAGGILQGDRYAIEIDLEPDTQAHVTTQSATRIQEMDANFATQTQTQTITLGANSYLEYIPHPIIPHKHSRFVQQTEVTIHPTATLIYSEVLMAGRKYYGTGELFHYDLFSSKFHAAHTDGTSLFTEKFIVEPARGNVSRLGAMGSFHVFGNLILLTPKTHADRLFETIDPVFDMDEGIAWGASRLPNDAGLLFKVLGMESAPVRAAIRKIWEAARQEVTGASLPENFLWA</sequence>
<proteinExistence type="inferred from homology"/>
<reference key="1">
    <citation type="journal article" date="2005" name="Infect. Immun.">
        <title>Whole-genome analyses of speciation events in pathogenic Brucellae.</title>
        <authorList>
            <person name="Chain P.S."/>
            <person name="Comerci D.J."/>
            <person name="Tolmasky M.E."/>
            <person name="Larimer F.W."/>
            <person name="Malfatti S.A."/>
            <person name="Vergez L.M."/>
            <person name="Aguero F."/>
            <person name="Land M.L."/>
            <person name="Ugalde R.A."/>
            <person name="Garcia E."/>
        </authorList>
    </citation>
    <scope>NUCLEOTIDE SEQUENCE [LARGE SCALE GENOMIC DNA]</scope>
    <source>
        <strain>2308</strain>
    </source>
</reference>
<reference key="2">
    <citation type="journal article" date="2007" name="Infect. Immun.">
        <title>Characterization of the urease operon of Brucella abortus and assessment of its role in virulence of the bacterium.</title>
        <authorList>
            <person name="Sangari F.J."/>
            <person name="Seoane A."/>
            <person name="Rodriguez M.C."/>
            <person name="Aguero J."/>
            <person name="Garcia Lobo J.M."/>
        </authorList>
    </citation>
    <scope>LACK OF ROLE IN VIRULENCE</scope>
</reference>
<dbReference type="EMBL" id="AM040264">
    <property type="protein sequence ID" value="CAJ11338.1"/>
    <property type="molecule type" value="Genomic_DNA"/>
</dbReference>
<dbReference type="RefSeq" id="WP_002964474.1">
    <property type="nucleotide sequence ID" value="NZ_KN046823.1"/>
</dbReference>
<dbReference type="SMR" id="Q2YQD5"/>
<dbReference type="STRING" id="359391.BAB1_1382"/>
<dbReference type="KEGG" id="bmf:BAB1_1382"/>
<dbReference type="PATRIC" id="fig|359391.11.peg.832"/>
<dbReference type="HOGENOM" id="CLU_056339_1_0_5"/>
<dbReference type="PhylomeDB" id="Q2YQD5"/>
<dbReference type="Proteomes" id="UP000002719">
    <property type="component" value="Chromosome I"/>
</dbReference>
<dbReference type="GO" id="GO:0005737">
    <property type="term" value="C:cytoplasm"/>
    <property type="evidence" value="ECO:0007669"/>
    <property type="project" value="UniProtKB-SubCell"/>
</dbReference>
<dbReference type="GO" id="GO:0016151">
    <property type="term" value="F:nickel cation binding"/>
    <property type="evidence" value="ECO:0007669"/>
    <property type="project" value="UniProtKB-UniRule"/>
</dbReference>
<dbReference type="HAMAP" id="MF_01384">
    <property type="entry name" value="UreD"/>
    <property type="match status" value="1"/>
</dbReference>
<dbReference type="InterPro" id="IPR002669">
    <property type="entry name" value="UreD"/>
</dbReference>
<dbReference type="PANTHER" id="PTHR33643">
    <property type="entry name" value="UREASE ACCESSORY PROTEIN D"/>
    <property type="match status" value="1"/>
</dbReference>
<dbReference type="PANTHER" id="PTHR33643:SF1">
    <property type="entry name" value="UREASE ACCESSORY PROTEIN D"/>
    <property type="match status" value="1"/>
</dbReference>
<dbReference type="Pfam" id="PF01774">
    <property type="entry name" value="UreD"/>
    <property type="match status" value="1"/>
</dbReference>
<keyword id="KW-0143">Chaperone</keyword>
<keyword id="KW-0963">Cytoplasm</keyword>
<keyword id="KW-0996">Nickel insertion</keyword>
<keyword id="KW-1185">Reference proteome</keyword>
<gene>
    <name evidence="1" type="primary">ureD2</name>
    <name type="synonym">ureD-2</name>
    <name type="ordered locus">BAB1_1382</name>
</gene>
<comment type="function">
    <text evidence="1">Required for maturation of urease via the functional incorporation of the urease nickel metallocenter.</text>
</comment>
<comment type="function">
    <text>Disrupting the ure2 operon has no effect on urease activity or pathogen survival in BALB/c mice when administered orally.</text>
</comment>
<comment type="subunit">
    <text evidence="1">UreD, UreF and UreG form a complex that acts as a GTP-hydrolysis-dependent molecular chaperone, activating the urease apoprotein by helping to assemble the nickel containing metallocenter of UreC. The UreE protein probably delivers the nickel.</text>
</comment>
<comment type="subcellular location">
    <subcellularLocation>
        <location evidence="1">Cytoplasm</location>
    </subcellularLocation>
</comment>
<comment type="similarity">
    <text evidence="1">Belongs to the UreD family.</text>
</comment>
<evidence type="ECO:0000255" key="1">
    <source>
        <dbReference type="HAMAP-Rule" id="MF_01384"/>
    </source>
</evidence>